<dbReference type="EMBL" id="GQ427676">
    <property type="protein sequence ID" value="ADK22842.1"/>
    <property type="molecule type" value="mRNA"/>
</dbReference>
<dbReference type="SMR" id="E2D0Z0"/>
<dbReference type="Allergome" id="8202">
    <property type="allergen name" value="Sal k 5"/>
</dbReference>
<dbReference type="Allergome" id="8203">
    <property type="allergen name" value="Sal k 5.0101"/>
</dbReference>
<dbReference type="GO" id="GO:0005576">
    <property type="term" value="C:extracellular region"/>
    <property type="evidence" value="ECO:0007669"/>
    <property type="project" value="UniProtKB-SubCell"/>
</dbReference>
<dbReference type="InterPro" id="IPR006041">
    <property type="entry name" value="Pollen_Ole_e1_allergen"/>
</dbReference>
<dbReference type="PANTHER" id="PTHR31614:SF2">
    <property type="entry name" value="F28N24.16 PROTEIN"/>
    <property type="match status" value="1"/>
</dbReference>
<dbReference type="PANTHER" id="PTHR31614">
    <property type="entry name" value="PROTEIN DOWNSTREAM OF FLC-RELATED"/>
    <property type="match status" value="1"/>
</dbReference>
<dbReference type="Pfam" id="PF01190">
    <property type="entry name" value="Pollen_Ole_e_1"/>
    <property type="match status" value="1"/>
</dbReference>
<sequence length="151" mass="16449">KGKGGHNLYHVKGMVYCDTCRIQFITRVSTMMEGATVSLQCRNLTAGTETFKAEAVTDKLGMYTIKVDGDHEDDICQIVLVKSPGQECSEIPNDVYSEQAAKVTLTSNNGEASDVRNANALGFLKKAPLPECPEVLKELDMYDVPGSVTQN</sequence>
<protein>
    <recommendedName>
        <fullName evidence="5">Pollen allergen Sal k 5.0101</fullName>
    </recommendedName>
    <alternativeName>
        <fullName evidence="4">Allergen Sal k 5</fullName>
    </alternativeName>
    <alternativeName>
        <fullName evidence="4">Olee1-like protein Sal k 5</fullName>
    </alternativeName>
    <allergenName evidence="5">Sal k 5.0101</allergenName>
</protein>
<feature type="chain" id="PRO_0000449241" description="Pollen allergen Sal k 5.0101">
    <location>
        <begin position="1" status="less than"/>
        <end position="151"/>
    </location>
</feature>
<feature type="glycosylation site" description="N-linked (GlcNAc...) asparagine" evidence="2">
    <location>
        <position position="43"/>
    </location>
</feature>
<feature type="disulfide bond" evidence="1">
    <location>
        <begin position="17"/>
        <end position="88"/>
    </location>
</feature>
<feature type="disulfide bond" evidence="1">
    <location>
        <begin position="20"/>
        <end position="132"/>
    </location>
</feature>
<feature type="disulfide bond" evidence="1">
    <location>
        <begin position="41"/>
        <end position="76"/>
    </location>
</feature>
<feature type="sequence conflict" description="In Ref. 1; AA sequence." evidence="5" ref="1">
    <original>K</original>
    <variation>N</variation>
    <location>
        <position position="3"/>
    </location>
</feature>
<feature type="sequence conflict" description="In Ref. 1; AA sequence." evidence="5" ref="1">
    <original>LQ</original>
    <variation>IK</variation>
    <location>
        <begin position="39"/>
        <end position="40"/>
    </location>
</feature>
<feature type="sequence conflict" description="In Ref. 1; AA sequence." evidence="5" ref="1">
    <original>I</original>
    <variation>L</variation>
    <location>
        <position position="75"/>
    </location>
</feature>
<feature type="sequence conflict" description="In Ref. 1; AA sequence." evidence="5" ref="1">
    <original>QI</original>
    <variation>KL</variation>
    <location>
        <begin position="77"/>
        <end position="78"/>
    </location>
</feature>
<feature type="non-terminal residue" evidence="6">
    <location>
        <position position="1"/>
    </location>
</feature>
<accession>E2D0Z0</accession>
<comment type="subcellular location">
    <subcellularLocation>
        <location evidence="3">Secreted</location>
    </subcellularLocation>
</comment>
<comment type="tissue specificity">
    <text evidence="3">Expressed in pollen (at protein level).</text>
</comment>
<comment type="PTM">
    <text evidence="3">N-glycosylated. Contains fucose monosaccharides in the glycan structure.</text>
</comment>
<comment type="mass spectrometry" mass="17628.0" method="MALDI" evidence="3">
    <text>The measured mass is that of the mature protein.</text>
</comment>
<comment type="allergen">
    <text evidence="3">Causes an allergic reaction in human. Natural protein binds to IgE in 32% and 40% of the 57 S.kali pollen-allergic patients tested from the center (Zaragoza) and east coast (Murcia) of Spain, respectively. IgE-binding is decreased when the disulfide bonds are disrupted.</text>
</comment>
<comment type="similarity">
    <text evidence="5">Belongs to the Ole e I family.</text>
</comment>
<reference evidence="6" key="1">
    <citation type="journal article" date="2014" name="Int. Arch. Allergy Immunol.">
        <title>Sal k 5, a member of the widespread Ole e 1-like protein family, is a new allergen of Russian thistle (Salsola kali) pollen.</title>
        <authorList>
            <person name="Castro L."/>
            <person name="Mas S."/>
            <person name="Barderas R."/>
            <person name="Colas C."/>
            <person name="Garcia-Selles J."/>
            <person name="Barber D."/>
            <person name="Rodriguez R."/>
            <person name="Villalba M."/>
        </authorList>
    </citation>
    <scope>NUCLEOTIDE SEQUENCE [MRNA]</scope>
    <scope>PROTEIN SEQUENCE OF 1-3; 15-21; 30-42; 67-82 AND 118-125</scope>
    <scope>SUBCELLULAR LOCATION</scope>
    <scope>TISSUE SPECIFICITY</scope>
    <scope>GLYCOSYLATION</scope>
    <scope>MASS SPECTROMETRY</scope>
    <scope>ALLERGEN</scope>
    <scope>CIRCULAR DICHROISM ANALYSIS</scope>
    <source>
        <tissue evidence="4 6">Pollen</tissue>
    </source>
</reference>
<organism evidence="6">
    <name type="scientific">Kali turgidum</name>
    <name type="common">Prickly saltwort</name>
    <name type="synonym">Salsola kali</name>
    <dbReference type="NCBI Taxonomy" id="151250"/>
    <lineage>
        <taxon>Eukaryota</taxon>
        <taxon>Viridiplantae</taxon>
        <taxon>Streptophyta</taxon>
        <taxon>Embryophyta</taxon>
        <taxon>Tracheophyta</taxon>
        <taxon>Spermatophyta</taxon>
        <taxon>Magnoliopsida</taxon>
        <taxon>eudicotyledons</taxon>
        <taxon>Gunneridae</taxon>
        <taxon>Pentapetalae</taxon>
        <taxon>Caryophyllales</taxon>
        <taxon>Chenopodiaceae</taxon>
        <taxon>Salsoloideae</taxon>
        <taxon>Salsoleae</taxon>
        <taxon>Kali</taxon>
    </lineage>
</organism>
<proteinExistence type="evidence at protein level"/>
<name>SALK5_KALTU</name>
<keyword id="KW-0020">Allergen</keyword>
<keyword id="KW-0903">Direct protein sequencing</keyword>
<keyword id="KW-1015">Disulfide bond</keyword>
<keyword id="KW-0325">Glycoprotein</keyword>
<keyword id="KW-0964">Secreted</keyword>
<evidence type="ECO:0000250" key="1">
    <source>
        <dbReference type="UniProtKB" id="P19963"/>
    </source>
</evidence>
<evidence type="ECO:0000255" key="2">
    <source>
        <dbReference type="PROSITE-ProRule" id="PRU00498"/>
    </source>
</evidence>
<evidence type="ECO:0000269" key="3">
    <source>
    </source>
</evidence>
<evidence type="ECO:0000303" key="4">
    <source>
    </source>
</evidence>
<evidence type="ECO:0000305" key="5"/>
<evidence type="ECO:0000312" key="6">
    <source>
        <dbReference type="EMBL" id="ADK22842.1"/>
    </source>
</evidence>